<protein>
    <recommendedName>
        <fullName>DNA polymerase II large subunit</fullName>
        <shortName>Pol II</shortName>
        <ecNumber evidence="3">2.7.7.7</ecNumber>
    </recommendedName>
    <alternativeName>
        <fullName evidence="3">Exodeoxyribonuclease large subunit</fullName>
        <ecNumber evidence="3">3.1.11.1</ecNumber>
    </alternativeName>
    <component>
        <recommendedName>
            <fullName>Pab polC intein</fullName>
        </recommendedName>
        <alternativeName>
            <fullName>Pab pol II intein</fullName>
        </alternativeName>
    </component>
</protein>
<proteinExistence type="evidence at protein level"/>
<comment type="function">
    <text evidence="1">Possesses two activities: a DNA synthesis (polymerase) and an exonucleolytic activity that degrades single-stranded DNA in the 3'- to 5'-direction. Has a template-primer preference which is characteristic of a replicative DNA polymerase (By similarity).</text>
</comment>
<comment type="catalytic activity">
    <reaction>
        <text>DNA(n) + a 2'-deoxyribonucleoside 5'-triphosphate = DNA(n+1) + diphosphate</text>
        <dbReference type="Rhea" id="RHEA:22508"/>
        <dbReference type="Rhea" id="RHEA-COMP:17339"/>
        <dbReference type="Rhea" id="RHEA-COMP:17340"/>
        <dbReference type="ChEBI" id="CHEBI:33019"/>
        <dbReference type="ChEBI" id="CHEBI:61560"/>
        <dbReference type="ChEBI" id="CHEBI:173112"/>
        <dbReference type="EC" id="2.7.7.7"/>
    </reaction>
</comment>
<comment type="catalytic activity">
    <reaction evidence="3">
        <text>Exonucleolytic cleavage in the 3'- to 5'-direction to yield nucleoside 5'-phosphates.</text>
        <dbReference type="EC" id="3.1.11.1"/>
    </reaction>
</comment>
<comment type="subunit">
    <text evidence="1">Heterodimer of a large subunit and a small subunit.</text>
</comment>
<comment type="PTM">
    <text evidence="5">This protein undergoes a protein self splicing that involves a post-translational excision of the intervening region (intein) followed by peptide ligation.</text>
</comment>
<comment type="similarity">
    <text evidence="5">Belongs to the archaeal DNA polymerase II family.</text>
</comment>
<keyword id="KW-0002">3D-structure</keyword>
<keyword id="KW-0068">Autocatalytic cleavage</keyword>
<keyword id="KW-0235">DNA replication</keyword>
<keyword id="KW-0238">DNA-binding</keyword>
<keyword id="KW-0239">DNA-directed DNA polymerase</keyword>
<keyword id="KW-0269">Exonuclease</keyword>
<keyword id="KW-0378">Hydrolase</keyword>
<keyword id="KW-0511">Multifunctional enzyme</keyword>
<keyword id="KW-0540">Nuclease</keyword>
<keyword id="KW-0548">Nucleotidyltransferase</keyword>
<keyword id="KW-0651">Protein splicing</keyword>
<keyword id="KW-0808">Transferase</keyword>
<reference key="1">
    <citation type="journal article" date="2003" name="Mol. Microbiol.">
        <title>An integrated analysis of the genome of the hyperthermophilic archaeon Pyrococcus abyssi.</title>
        <authorList>
            <person name="Cohen G.N."/>
            <person name="Barbe V."/>
            <person name="Flament D."/>
            <person name="Galperin M."/>
            <person name="Heilig R."/>
            <person name="Lecompte O."/>
            <person name="Poch O."/>
            <person name="Prieur D."/>
            <person name="Querellou J."/>
            <person name="Ripp R."/>
            <person name="Thierry J.-C."/>
            <person name="Van der Oost J."/>
            <person name="Weissenbach J."/>
            <person name="Zivanovic Y."/>
            <person name="Forterre P."/>
        </authorList>
    </citation>
    <scope>NUCLEOTIDE SEQUENCE [LARGE SCALE GENOMIC DNA]</scope>
    <source>
        <strain>GE5 / Orsay</strain>
    </source>
</reference>
<reference key="2">
    <citation type="journal article" date="2012" name="Curr. Microbiol.">
        <title>Re-annotation of two hyperthermophilic archaea Pyrococcus abyssi GE5 and Pyrococcus furiosus DSM 3638.</title>
        <authorList>
            <person name="Gao J."/>
            <person name="Wang J."/>
        </authorList>
    </citation>
    <scope>GENOME REANNOTATION</scope>
    <source>
        <strain>GE5 / Orsay</strain>
    </source>
</reference>
<accession>Q9V2F4</accession>
<accession>G8ZFV5</accession>
<evidence type="ECO:0000250" key="1"/>
<evidence type="ECO:0000255" key="2"/>
<evidence type="ECO:0000255" key="3">
    <source>
        <dbReference type="HAMAP-Rule" id="MF_00324"/>
    </source>
</evidence>
<evidence type="ECO:0000256" key="4">
    <source>
        <dbReference type="SAM" id="MobiDB-lite"/>
    </source>
</evidence>
<evidence type="ECO:0000305" key="5"/>
<evidence type="ECO:0007829" key="6">
    <source>
        <dbReference type="PDB" id="2LCJ"/>
    </source>
</evidence>
<evidence type="ECO:0007829" key="7">
    <source>
        <dbReference type="PDB" id="5IJL"/>
    </source>
</evidence>
<evidence type="ECO:0007829" key="8">
    <source>
        <dbReference type="PDB" id="8PPT"/>
    </source>
</evidence>
<evidence type="ECO:0007829" key="9">
    <source>
        <dbReference type="PDB" id="8PPU"/>
    </source>
</evidence>
<evidence type="ECO:0007829" key="10">
    <source>
        <dbReference type="PDB" id="8PPV"/>
    </source>
</evidence>
<organism>
    <name type="scientific">Pyrococcus abyssi (strain GE5 / Orsay)</name>
    <dbReference type="NCBI Taxonomy" id="272844"/>
    <lineage>
        <taxon>Archaea</taxon>
        <taxon>Methanobacteriati</taxon>
        <taxon>Methanobacteriota</taxon>
        <taxon>Thermococci</taxon>
        <taxon>Thermococcales</taxon>
        <taxon>Thermococcaceae</taxon>
        <taxon>Pyrococcus</taxon>
    </lineage>
</organism>
<sequence length="1455" mass="165711">MELPKEMEEYFEMLQREIDKAYEIAKKARAQGKDPSLDVEIPQATDMAGRVESLVGPPGVAKRIRELVKEYGKEIAALKIVDEIIEGKFGDLGSREKYAEQAVRTALAILTEGIVSAPIEGIANVKIKRNTWADNSEYLALYYAGPIRSSGGTAQALSVLVGDYVRRKLGLDRFKPSEKHIERMVEEVDLYHRAVTRLQYHPSPEEVRLAMRNIPIEITGEATDDVEVSHRDVPGVETNQLRGGAILVLAEGVLQKAKKLVKYIDKMGIEGWEWLKEFVEAKEKGEPKEEGKEESLAESTLEETKVEVDMGFYYSLYQKFKEEIAPSDKYAKEVIGGRPLFSDPSKPGGFRLRYGRSRASGFATWGINPATMILVDEFLAIGTQLKTERPGKGAVVTPVTTIEGPIVKLKDGSVLRVDDYNLALKVREDVEEILYLGDAVIAFGDFVENNQTLLPANYCEEWWILEFVKALKEIYEVHLEPFTENEEESIEEASDYLEIDPEFLKEMLRDPLRVKPPVELAIHFSEVLGIPLHPYYTLYWNSVEPKDVEKLWRLLKNYAEIEWSNFRGIKFAKKIVISQEKLGDSKRTLELLGLPHTVRDGNVIVDYPWAAALLTPLGNLNWEFMAKPLYATIDIINENNEIKLRDRGISWIGARMGRPEKAKERKMKPPVQVLFPIGLAGGSSRDIKKAAEEGKVAEVEIAFFKCPKCGHVGPEHLCPNCGTRKELLWVCPRCNAEYPESQAEGYNYTCPKCNVKLRPYAKRKIRPSELLNRAMENVKVYGVDKLKGVMGMTSGWKMPEPLEKGLLRAKNDVYVFKDGTIRFDATDAPITHFRPREIGVSVEKLRELGYTHDFEGKPLVSEDQIVELKPQDIILSKEAGRYLLKVAKFVDDLLEKFYGLPRFYNAEKMEDLIGHLVIGLAPHTSAGIVGRIIGFVDALVGYAHPYFHAAKRRNCFPGDTRILVQIDGVPQKITLRELYELFEDERYENMVYVRKKPKREIKVYSIDLETGKVVLTDIEDVIKAPATDHLIRFELEDGRSFETTVDHPVLVYENGRFIEKRAFEVKEGDKVLVSELELVEQSSSSQDNPKNENLGSPEHDQLLEIKNIKYVRANDDFVFSLNAKKYHNVIINENIVTHQCDGDEDAVMLLLDALLNFSRYYLPEKRGGKMDAPLVITTRLDPREVDSEVHNMDIVRYYPLEFYEATYELKSPKELVGVIERVEDRLGKPEMYYGLKFTHDTDDIALGPKMSLYKQLGDMEEKVRRQLEVAKRIRAVDEHGVAEKILNSHLIPDLRGNLRSFTRQEFRCVKCNTKFRRPPLNGKCPVCGGKIVLTVSKGAIEKYLGTAKMLVTEYNVKNYTRQRICLTERDIDSLFENVFPETQLTLIVNPNDICQRLVMARTGEVNKSGLLENLSNGSKKTEKAEKAEKPRKKSDEKPKKKRVISLEEFFSRKSK</sequence>
<feature type="chain" id="PRO_0000007304" description="DNA polymerase II large subunit, 1st part" evidence="2">
    <location>
        <begin position="1"/>
        <end position="954"/>
    </location>
</feature>
<feature type="chain" id="PRO_0000007305" description="Pab polC intein" evidence="2">
    <location>
        <begin position="955"/>
        <end position="1139"/>
    </location>
</feature>
<feature type="chain" id="PRO_0000007306" description="DNA polymerase II large subunit, 2nd part" evidence="2">
    <location>
        <begin position="1140"/>
        <end position="1455"/>
    </location>
</feature>
<feature type="region of interest" description="Disordered" evidence="4">
    <location>
        <begin position="1409"/>
        <end position="1440"/>
    </location>
</feature>
<feature type="compositionally biased region" description="Basic and acidic residues" evidence="4">
    <location>
        <begin position="1419"/>
        <end position="1438"/>
    </location>
</feature>
<feature type="helix" evidence="7">
    <location>
        <begin position="5"/>
        <end position="29"/>
    </location>
</feature>
<feature type="strand" evidence="8">
    <location>
        <begin position="34"/>
        <end position="38"/>
    </location>
</feature>
<feature type="strand" evidence="7">
    <location>
        <begin position="43"/>
        <end position="46"/>
    </location>
</feature>
<feature type="helix" evidence="7">
    <location>
        <begin position="47"/>
        <end position="55"/>
    </location>
</feature>
<feature type="helix" evidence="7">
    <location>
        <begin position="60"/>
        <end position="71"/>
    </location>
</feature>
<feature type="helix" evidence="7">
    <location>
        <begin position="73"/>
        <end position="85"/>
    </location>
</feature>
<feature type="turn" evidence="7">
    <location>
        <begin position="86"/>
        <end position="89"/>
    </location>
</feature>
<feature type="helix" evidence="7">
    <location>
        <begin position="95"/>
        <end position="110"/>
    </location>
</feature>
<feature type="turn" evidence="7">
    <location>
        <begin position="111"/>
        <end position="113"/>
    </location>
</feature>
<feature type="turn" evidence="7">
    <location>
        <begin position="117"/>
        <end position="121"/>
    </location>
</feature>
<feature type="strand" evidence="7">
    <location>
        <begin position="122"/>
        <end position="129"/>
    </location>
</feature>
<feature type="turn" evidence="7">
    <location>
        <begin position="131"/>
        <end position="134"/>
    </location>
</feature>
<feature type="strand" evidence="7">
    <location>
        <begin position="137"/>
        <end position="143"/>
    </location>
</feature>
<feature type="helix" evidence="7">
    <location>
        <begin position="145"/>
        <end position="150"/>
    </location>
</feature>
<feature type="helix" evidence="7">
    <location>
        <begin position="151"/>
        <end position="168"/>
    </location>
</feature>
<feature type="helix" evidence="7">
    <location>
        <begin position="178"/>
        <end position="194"/>
    </location>
</feature>
<feature type="helix" evidence="7">
    <location>
        <begin position="204"/>
        <end position="213"/>
    </location>
</feature>
<feature type="strand" evidence="7">
    <location>
        <begin position="215"/>
        <end position="219"/>
    </location>
</feature>
<feature type="strand" evidence="7">
    <location>
        <begin position="224"/>
        <end position="227"/>
    </location>
</feature>
<feature type="strand" evidence="7">
    <location>
        <begin position="239"/>
        <end position="241"/>
    </location>
</feature>
<feature type="helix" evidence="7">
    <location>
        <begin position="243"/>
        <end position="251"/>
    </location>
</feature>
<feature type="turn" evidence="7">
    <location>
        <begin position="252"/>
        <end position="256"/>
    </location>
</feature>
<feature type="helix" evidence="7">
    <location>
        <begin position="257"/>
        <end position="267"/>
    </location>
</feature>
<feature type="helix" evidence="7">
    <location>
        <begin position="273"/>
        <end position="283"/>
    </location>
</feature>
<feature type="helix" evidence="7">
    <location>
        <begin position="312"/>
        <end position="322"/>
    </location>
</feature>
<feature type="helix" evidence="8">
    <location>
        <begin position="329"/>
        <end position="331"/>
    </location>
</feature>
<feature type="strand" evidence="7">
    <location>
        <begin position="344"/>
        <end position="346"/>
    </location>
</feature>
<feature type="strand" evidence="7">
    <location>
        <begin position="349"/>
        <end position="355"/>
    </location>
</feature>
<feature type="strand" evidence="8">
    <location>
        <begin position="365"/>
        <end position="367"/>
    </location>
</feature>
<feature type="helix" evidence="7">
    <location>
        <begin position="369"/>
        <end position="374"/>
    </location>
</feature>
<feature type="strand" evidence="8">
    <location>
        <begin position="384"/>
        <end position="390"/>
    </location>
</feature>
<feature type="strand" evidence="8">
    <location>
        <begin position="394"/>
        <end position="398"/>
    </location>
</feature>
<feature type="strand" evidence="7">
    <location>
        <begin position="400"/>
        <end position="402"/>
    </location>
</feature>
<feature type="strand" evidence="7">
    <location>
        <begin position="406"/>
        <end position="409"/>
    </location>
</feature>
<feature type="strand" evidence="7">
    <location>
        <begin position="414"/>
        <end position="416"/>
    </location>
</feature>
<feature type="helix" evidence="7">
    <location>
        <begin position="420"/>
        <end position="426"/>
    </location>
</feature>
<feature type="helix" evidence="7">
    <location>
        <begin position="427"/>
        <end position="429"/>
    </location>
</feature>
<feature type="strand" evidence="7">
    <location>
        <begin position="430"/>
        <end position="435"/>
    </location>
</feature>
<feature type="strand" evidence="7">
    <location>
        <begin position="438"/>
        <end position="443"/>
    </location>
</feature>
<feature type="helix" evidence="7">
    <location>
        <begin position="460"/>
        <end position="475"/>
    </location>
</feature>
<feature type="helix" evidence="7">
    <location>
        <begin position="487"/>
        <end position="497"/>
    </location>
</feature>
<feature type="helix" evidence="7">
    <location>
        <begin position="501"/>
        <end position="509"/>
    </location>
</feature>
<feature type="turn" evidence="7">
    <location>
        <begin position="511"/>
        <end position="513"/>
    </location>
</feature>
<feature type="helix" evidence="7">
    <location>
        <begin position="518"/>
        <end position="528"/>
    </location>
</feature>
<feature type="helix" evidence="7">
    <location>
        <begin position="534"/>
        <end position="536"/>
    </location>
</feature>
<feature type="helix" evidence="7">
    <location>
        <begin position="540"/>
        <end position="542"/>
    </location>
</feature>
<feature type="helix" evidence="7">
    <location>
        <begin position="545"/>
        <end position="558"/>
    </location>
</feature>
<feature type="strand" evidence="7">
    <location>
        <begin position="560"/>
        <end position="566"/>
    </location>
</feature>
<feature type="strand" evidence="7">
    <location>
        <begin position="569"/>
        <end position="578"/>
    </location>
</feature>
<feature type="helix" evidence="7">
    <location>
        <begin position="579"/>
        <end position="582"/>
    </location>
</feature>
<feature type="helix" evidence="7">
    <location>
        <begin position="585"/>
        <end position="591"/>
    </location>
</feature>
<feature type="strand" evidence="7">
    <location>
        <begin position="596"/>
        <end position="599"/>
    </location>
</feature>
<feature type="strand" evidence="7">
    <location>
        <begin position="602"/>
        <end position="606"/>
    </location>
</feature>
<feature type="helix" evidence="7">
    <location>
        <begin position="609"/>
        <end position="614"/>
    </location>
</feature>
<feature type="turn" evidence="7">
    <location>
        <begin position="615"/>
        <end position="617"/>
    </location>
</feature>
<feature type="helix" evidence="7">
    <location>
        <begin position="618"/>
        <end position="620"/>
    </location>
</feature>
<feature type="helix" evidence="7">
    <location>
        <begin position="632"/>
        <end position="639"/>
    </location>
</feature>
<feature type="strand" evidence="8">
    <location>
        <begin position="654"/>
        <end position="656"/>
    </location>
</feature>
<feature type="strand" evidence="9">
    <location>
        <begin position="662"/>
        <end position="664"/>
    </location>
</feature>
<feature type="turn" evidence="7">
    <location>
        <begin position="678"/>
        <end position="681"/>
    </location>
</feature>
<feature type="helix" evidence="7">
    <location>
        <begin position="682"/>
        <end position="684"/>
    </location>
</feature>
<feature type="helix" evidence="7">
    <location>
        <begin position="687"/>
        <end position="692"/>
    </location>
</feature>
<feature type="strand" evidence="7">
    <location>
        <begin position="697"/>
        <end position="701"/>
    </location>
</feature>
<feature type="strand" evidence="7">
    <location>
        <begin position="707"/>
        <end position="709"/>
    </location>
</feature>
<feature type="strand" evidence="7">
    <location>
        <begin position="712"/>
        <end position="714"/>
    </location>
</feature>
<feature type="turn" evidence="7">
    <location>
        <begin position="719"/>
        <end position="721"/>
    </location>
</feature>
<feature type="strand" evidence="7">
    <location>
        <begin position="726"/>
        <end position="730"/>
    </location>
</feature>
<feature type="turn" evidence="7">
    <location>
        <begin position="732"/>
        <end position="734"/>
    </location>
</feature>
<feature type="strand" evidence="7">
    <location>
        <begin position="737"/>
        <end position="739"/>
    </location>
</feature>
<feature type="helix" evidence="7">
    <location>
        <begin position="740"/>
        <end position="745"/>
    </location>
</feature>
<feature type="turn" evidence="7">
    <location>
        <begin position="746"/>
        <end position="748"/>
    </location>
</feature>
<feature type="strand" evidence="7">
    <location>
        <begin position="753"/>
        <end position="756"/>
    </location>
</feature>
<feature type="strand" evidence="7">
    <location>
        <begin position="761"/>
        <end position="765"/>
    </location>
</feature>
<feature type="helix" evidence="7">
    <location>
        <begin position="767"/>
        <end position="778"/>
    </location>
</feature>
<feature type="strand" evidence="7">
    <location>
        <begin position="789"/>
        <end position="791"/>
    </location>
</feature>
<feature type="strand" evidence="7">
    <location>
        <begin position="794"/>
        <end position="796"/>
    </location>
</feature>
<feature type="helix" evidence="7">
    <location>
        <begin position="802"/>
        <end position="811"/>
    </location>
</feature>
<feature type="strand" evidence="7">
    <location>
        <begin position="823"/>
        <end position="829"/>
    </location>
</feature>
<feature type="strand" evidence="7">
    <location>
        <begin position="831"/>
        <end position="833"/>
    </location>
</feature>
<feature type="helix" evidence="7">
    <location>
        <begin position="835"/>
        <end position="838"/>
    </location>
</feature>
<feature type="helix" evidence="7">
    <location>
        <begin position="842"/>
        <end position="847"/>
    </location>
</feature>
<feature type="strand" evidence="8">
    <location>
        <begin position="862"/>
        <end position="864"/>
    </location>
</feature>
<feature type="strand" evidence="7">
    <location>
        <begin position="872"/>
        <end position="876"/>
    </location>
</feature>
<feature type="helix" evidence="7">
    <location>
        <begin position="877"/>
        <end position="896"/>
    </location>
</feature>
<feature type="helix" evidence="7">
    <location>
        <begin position="909"/>
        <end position="912"/>
    </location>
</feature>
<feature type="strand" evidence="7">
    <location>
        <begin position="916"/>
        <end position="920"/>
    </location>
</feature>
<feature type="strand" evidence="7">
    <location>
        <begin position="926"/>
        <end position="943"/>
    </location>
</feature>
<feature type="turn" evidence="7">
    <location>
        <begin position="945"/>
        <end position="948"/>
    </location>
</feature>
<feature type="turn" evidence="7">
    <location>
        <begin position="950"/>
        <end position="955"/>
    </location>
</feature>
<feature type="strand" evidence="6">
    <location>
        <begin position="960"/>
        <end position="966"/>
    </location>
</feature>
<feature type="strand" evidence="6">
    <location>
        <begin position="969"/>
        <end position="974"/>
    </location>
</feature>
<feature type="helix" evidence="6">
    <location>
        <begin position="975"/>
        <end position="978"/>
    </location>
</feature>
<feature type="helix" evidence="6">
    <location>
        <begin position="979"/>
        <end position="981"/>
    </location>
</feature>
<feature type="strand" evidence="6">
    <location>
        <begin position="985"/>
        <end position="988"/>
    </location>
</feature>
<feature type="strand" evidence="6">
    <location>
        <begin position="991"/>
        <end position="994"/>
    </location>
</feature>
<feature type="strand" evidence="6">
    <location>
        <begin position="996"/>
        <end position="999"/>
    </location>
</feature>
<feature type="strand" evidence="6">
    <location>
        <begin position="1001"/>
        <end position="1007"/>
    </location>
</feature>
<feature type="turn" evidence="6">
    <location>
        <begin position="1008"/>
        <end position="1011"/>
    </location>
</feature>
<feature type="strand" evidence="6">
    <location>
        <begin position="1012"/>
        <end position="1025"/>
    </location>
</feature>
<feature type="strand" evidence="6">
    <location>
        <begin position="1030"/>
        <end position="1035"/>
    </location>
</feature>
<feature type="strand" evidence="6">
    <location>
        <begin position="1040"/>
        <end position="1043"/>
    </location>
</feature>
<feature type="strand" evidence="6">
    <location>
        <begin position="1045"/>
        <end position="1053"/>
    </location>
</feature>
<feature type="strand" evidence="6">
    <location>
        <begin position="1056"/>
        <end position="1061"/>
    </location>
</feature>
<feature type="helix" evidence="6">
    <location>
        <begin position="1062"/>
        <end position="1064"/>
    </location>
</feature>
<feature type="strand" evidence="6">
    <location>
        <begin position="1070"/>
        <end position="1073"/>
    </location>
</feature>
<feature type="strand" evidence="6">
    <location>
        <begin position="1083"/>
        <end position="1086"/>
    </location>
</feature>
<feature type="strand" evidence="6">
    <location>
        <begin position="1103"/>
        <end position="1111"/>
    </location>
</feature>
<feature type="strand" evidence="6">
    <location>
        <begin position="1114"/>
        <end position="1119"/>
    </location>
</feature>
<feature type="strand" evidence="6">
    <location>
        <begin position="1126"/>
        <end position="1131"/>
    </location>
</feature>
<feature type="turn" evidence="6">
    <location>
        <begin position="1132"/>
        <end position="1134"/>
    </location>
</feature>
<feature type="strand" evidence="6">
    <location>
        <begin position="1135"/>
        <end position="1138"/>
    </location>
</feature>
<feature type="strand" evidence="7">
    <location>
        <begin position="1144"/>
        <end position="1149"/>
    </location>
</feature>
<feature type="helix" evidence="7">
    <location>
        <begin position="1150"/>
        <end position="1156"/>
    </location>
</feature>
<feature type="helix" evidence="7">
    <location>
        <begin position="1159"/>
        <end position="1161"/>
    </location>
</feature>
<feature type="strand" evidence="7">
    <location>
        <begin position="1162"/>
        <end position="1165"/>
    </location>
</feature>
<feature type="strand" evidence="8">
    <location>
        <begin position="1168"/>
        <end position="1171"/>
    </location>
</feature>
<feature type="strand" evidence="7">
    <location>
        <begin position="1174"/>
        <end position="1177"/>
    </location>
</feature>
<feature type="helix" evidence="8">
    <location>
        <begin position="1182"/>
        <end position="1184"/>
    </location>
</feature>
<feature type="helix" evidence="8">
    <location>
        <begin position="1188"/>
        <end position="1191"/>
    </location>
</feature>
<feature type="helix" evidence="7">
    <location>
        <begin position="1200"/>
        <end position="1205"/>
    </location>
</feature>
<feature type="helix" evidence="7">
    <location>
        <begin position="1206"/>
        <end position="1208"/>
    </location>
</feature>
<feature type="helix" evidence="7">
    <location>
        <begin position="1212"/>
        <end position="1222"/>
    </location>
</feature>
<feature type="strand" evidence="9">
    <location>
        <begin position="1226"/>
        <end position="1229"/>
    </location>
</feature>
<feature type="helix" evidence="8">
    <location>
        <begin position="1252"/>
        <end position="1255"/>
    </location>
</feature>
<feature type="helix" evidence="8">
    <location>
        <begin position="1259"/>
        <end position="1272"/>
    </location>
</feature>
<feature type="turn" evidence="10">
    <location>
        <begin position="1274"/>
        <end position="1276"/>
    </location>
</feature>
<feature type="helix" evidence="8">
    <location>
        <begin position="1278"/>
        <end position="1301"/>
    </location>
</feature>
<feature type="strand" evidence="8">
    <location>
        <begin position="1306"/>
        <end position="1311"/>
    </location>
</feature>
<feature type="strand" evidence="8">
    <location>
        <begin position="1314"/>
        <end position="1317"/>
    </location>
</feature>
<feature type="strand" evidence="10">
    <location>
        <begin position="1320"/>
        <end position="1323"/>
    </location>
</feature>
<feature type="strand" evidence="8">
    <location>
        <begin position="1330"/>
        <end position="1332"/>
    </location>
</feature>
<feature type="helix" evidence="8">
    <location>
        <begin position="1337"/>
        <end position="1339"/>
    </location>
</feature>
<feature type="turn" evidence="8">
    <location>
        <begin position="1340"/>
        <end position="1342"/>
    </location>
</feature>
<feature type="helix" evidence="8">
    <location>
        <begin position="1344"/>
        <end position="1353"/>
    </location>
</feature>
<feature type="helix" evidence="8">
    <location>
        <begin position="1358"/>
        <end position="1374"/>
    </location>
</feature>
<feature type="turn" evidence="8">
    <location>
        <begin position="1375"/>
        <end position="1378"/>
    </location>
</feature>
<feature type="helix" evidence="8">
    <location>
        <begin position="1394"/>
        <end position="1399"/>
    </location>
</feature>
<dbReference type="EC" id="2.7.7.7" evidence="3"/>
<dbReference type="EC" id="3.1.11.1" evidence="3"/>
<dbReference type="EMBL" id="AJ248283">
    <property type="protein sequence ID" value="CAB49044.1"/>
    <property type="molecule type" value="Genomic_DNA"/>
</dbReference>
<dbReference type="EMBL" id="HE613800">
    <property type="protein sequence ID" value="CCE69496.1"/>
    <property type="molecule type" value="Genomic_DNA"/>
</dbReference>
<dbReference type="PIR" id="E75199">
    <property type="entry name" value="E75199"/>
</dbReference>
<dbReference type="RefSeq" id="WP_010867244.1">
    <property type="nucleotide sequence ID" value="NC_000868.1"/>
</dbReference>
<dbReference type="PDB" id="2LCJ">
    <property type="method" value="NMR"/>
    <property type="chains" value="A=955-1139"/>
</dbReference>
<dbReference type="PDB" id="5IJL">
    <property type="method" value="X-ray"/>
    <property type="resolution" value="2.19 A"/>
    <property type="chains" value="A=2-1246"/>
</dbReference>
<dbReference type="PDB" id="6HMS">
    <property type="method" value="EM"/>
    <property type="resolution" value="7.10 A"/>
    <property type="chains" value="B=1-1455"/>
</dbReference>
<dbReference type="PDB" id="6T7Y">
    <property type="method" value="X-ray"/>
    <property type="resolution" value="2.70 A"/>
    <property type="chains" value="B=1440-1451"/>
</dbReference>
<dbReference type="PDB" id="6T8H">
    <property type="method" value="EM"/>
    <property type="resolution" value="3.77 A"/>
    <property type="chains" value="B=2-1455"/>
</dbReference>
<dbReference type="PDB" id="8PPT">
    <property type="method" value="EM"/>
    <property type="resolution" value="2.90 A"/>
    <property type="chains" value="B=1-1455"/>
</dbReference>
<dbReference type="PDB" id="8PPU">
    <property type="method" value="EM"/>
    <property type="resolution" value="3.02 A"/>
    <property type="chains" value="B=1-1455"/>
</dbReference>
<dbReference type="PDB" id="8PPV">
    <property type="method" value="EM"/>
    <property type="resolution" value="3.02 A"/>
    <property type="chains" value="B=1-1455"/>
</dbReference>
<dbReference type="PDBsum" id="2LCJ"/>
<dbReference type="PDBsum" id="5IJL"/>
<dbReference type="PDBsum" id="6HMS"/>
<dbReference type="PDBsum" id="6T7Y"/>
<dbReference type="PDBsum" id="6T8H"/>
<dbReference type="PDBsum" id="8PPT"/>
<dbReference type="PDBsum" id="8PPU"/>
<dbReference type="PDBsum" id="8PPV"/>
<dbReference type="BMRB" id="Q9V2F4"/>
<dbReference type="EMDB" id="EMD-0244"/>
<dbReference type="EMDB" id="EMD-17815"/>
<dbReference type="EMDB" id="EMD-17816"/>
<dbReference type="EMDB" id="EMD-17817"/>
<dbReference type="EMDB" id="EMD-50141"/>
<dbReference type="EMDB" id="EMD-50144"/>
<dbReference type="SMR" id="Q9V2F4"/>
<dbReference type="STRING" id="272844.PAB2404"/>
<dbReference type="MEROPS" id="N10.005"/>
<dbReference type="KEGG" id="pab:PAB2404"/>
<dbReference type="PATRIC" id="fig|272844.11.peg.133"/>
<dbReference type="eggNOG" id="arCOG04447">
    <property type="taxonomic scope" value="Archaea"/>
</dbReference>
<dbReference type="HOGENOM" id="CLU_001154_0_0_2"/>
<dbReference type="OrthoDB" id="7529at2157"/>
<dbReference type="PhylomeDB" id="Q9V2F4"/>
<dbReference type="BRENDA" id="2.7.7.7">
    <property type="organism ID" value="5242"/>
</dbReference>
<dbReference type="EvolutionaryTrace" id="Q9V2F4"/>
<dbReference type="Proteomes" id="UP000000810">
    <property type="component" value="Chromosome"/>
</dbReference>
<dbReference type="Proteomes" id="UP000009139">
    <property type="component" value="Chromosome"/>
</dbReference>
<dbReference type="GO" id="GO:0003677">
    <property type="term" value="F:DNA binding"/>
    <property type="evidence" value="ECO:0007669"/>
    <property type="project" value="UniProtKB-UniRule"/>
</dbReference>
<dbReference type="GO" id="GO:0003887">
    <property type="term" value="F:DNA-directed DNA polymerase activity"/>
    <property type="evidence" value="ECO:0007669"/>
    <property type="project" value="UniProtKB-UniRule"/>
</dbReference>
<dbReference type="GO" id="GO:0008310">
    <property type="term" value="F:single-stranded DNA 3'-5' DNA exonuclease activity"/>
    <property type="evidence" value="ECO:0007669"/>
    <property type="project" value="UniProtKB-EC"/>
</dbReference>
<dbReference type="GO" id="GO:0006308">
    <property type="term" value="P:DNA catabolic process"/>
    <property type="evidence" value="ECO:0007669"/>
    <property type="project" value="UniProtKB-UniRule"/>
</dbReference>
<dbReference type="GO" id="GO:0006261">
    <property type="term" value="P:DNA-templated DNA replication"/>
    <property type="evidence" value="ECO:0007669"/>
    <property type="project" value="UniProtKB-UniRule"/>
</dbReference>
<dbReference type="GO" id="GO:0016539">
    <property type="term" value="P:intein-mediated protein splicing"/>
    <property type="evidence" value="ECO:0007669"/>
    <property type="project" value="InterPro"/>
</dbReference>
<dbReference type="CDD" id="cd00081">
    <property type="entry name" value="Hint"/>
    <property type="match status" value="1"/>
</dbReference>
<dbReference type="Gene3D" id="2.170.16.10">
    <property type="entry name" value="Hedgehog/Intein (Hint) domain"/>
    <property type="match status" value="1"/>
</dbReference>
<dbReference type="HAMAP" id="MF_00324">
    <property type="entry name" value="DNApol_II_L_arch"/>
    <property type="match status" value="1"/>
</dbReference>
<dbReference type="InterPro" id="IPR003587">
    <property type="entry name" value="Hint_dom_N"/>
</dbReference>
<dbReference type="InterPro" id="IPR036844">
    <property type="entry name" value="Hint_dom_sf"/>
</dbReference>
<dbReference type="InterPro" id="IPR030934">
    <property type="entry name" value="Intein_C"/>
</dbReference>
<dbReference type="InterPro" id="IPR006141">
    <property type="entry name" value="Intein_N"/>
</dbReference>
<dbReference type="InterPro" id="IPR004475">
    <property type="entry name" value="PolC_DP2"/>
</dbReference>
<dbReference type="InterPro" id="IPR056172">
    <property type="entry name" value="PolC_DP2_cat_dom"/>
</dbReference>
<dbReference type="InterPro" id="IPR056171">
    <property type="entry name" value="PolC_DP2_central_dom"/>
</dbReference>
<dbReference type="InterPro" id="IPR016033">
    <property type="entry name" value="PolC_DP2_N"/>
</dbReference>
<dbReference type="NCBIfam" id="TIGR01445">
    <property type="entry name" value="intein_Nterm"/>
    <property type="match status" value="1"/>
</dbReference>
<dbReference type="NCBIfam" id="TIGR00354">
    <property type="entry name" value="polC"/>
    <property type="match status" value="1"/>
</dbReference>
<dbReference type="NCBIfam" id="NF003103">
    <property type="entry name" value="PRK04023.1"/>
    <property type="match status" value="1"/>
</dbReference>
<dbReference type="NCBIfam" id="NF011302">
    <property type="entry name" value="PRK14714.1"/>
    <property type="match status" value="1"/>
</dbReference>
<dbReference type="NCBIfam" id="NF011303">
    <property type="entry name" value="PRK14715.1"/>
    <property type="match status" value="1"/>
</dbReference>
<dbReference type="PANTHER" id="PTHR42210">
    <property type="entry name" value="DNA POLYMERASE II LARGE SUBUNIT"/>
    <property type="match status" value="1"/>
</dbReference>
<dbReference type="PANTHER" id="PTHR42210:SF1">
    <property type="entry name" value="DNA POLYMERASE II LARGE SUBUNIT"/>
    <property type="match status" value="1"/>
</dbReference>
<dbReference type="Pfam" id="PF14890">
    <property type="entry name" value="Intein_splicing"/>
    <property type="match status" value="1"/>
</dbReference>
<dbReference type="Pfam" id="PF24846">
    <property type="entry name" value="PolC_DP2_cat"/>
    <property type="match status" value="2"/>
</dbReference>
<dbReference type="Pfam" id="PF24844">
    <property type="entry name" value="PolC_DP2_central"/>
    <property type="match status" value="1"/>
</dbReference>
<dbReference type="Pfam" id="PF03833">
    <property type="entry name" value="PolC_DP2_N"/>
    <property type="match status" value="1"/>
</dbReference>
<dbReference type="SMART" id="SM00306">
    <property type="entry name" value="HintN"/>
    <property type="match status" value="1"/>
</dbReference>
<dbReference type="SUPFAM" id="SSF51294">
    <property type="entry name" value="Hedgehog/intein (Hint) domain"/>
    <property type="match status" value="1"/>
</dbReference>
<dbReference type="PROSITE" id="PS50818">
    <property type="entry name" value="INTEIN_C_TER"/>
    <property type="match status" value="1"/>
</dbReference>
<dbReference type="PROSITE" id="PS50817">
    <property type="entry name" value="INTEIN_N_TER"/>
    <property type="match status" value="1"/>
</dbReference>
<name>DP2L_PYRAB</name>
<gene>
    <name type="primary">polC</name>
    <name type="ordered locus">PYRAB01200</name>
    <name type="ORF">PAB2404</name>
</gene>